<name>Y592_MYCSK</name>
<comment type="function">
    <text evidence="1">Exhibits S-adenosyl-L-methionine-dependent methyltransferase activity.</text>
</comment>
<comment type="similarity">
    <text evidence="2">Belongs to the UPF0677 family.</text>
</comment>
<keyword id="KW-0489">Methyltransferase</keyword>
<keyword id="KW-0949">S-adenosyl-L-methionine</keyword>
<keyword id="KW-0808">Transferase</keyword>
<evidence type="ECO:0000250" key="1"/>
<evidence type="ECO:0000305" key="2"/>
<gene>
    <name type="ordered locus">Mkms_0592</name>
</gene>
<sequence length="249" mass="27032">MTTPDGIVSALAVALARQSESHADCPLFNDPYAQVFIDAALSRGCQLPSDETSERINGIANYASSRTKWFDEYFIAAGAHGLEQMVIVAAGLDARAWRLPWVAGTTLFEIDHPGVLKFKNEALHEHGESPSVSRYVPVPADLSDGWSERLRDAGFDVSEPTAWAVEGLLPYVADGPHLLFDRIHEISPAGSRLAVEAVGTGVADWLSTQGWQVTMIGAQELMTRYGRCGDHSDTDAGMDTVFVNATRTR</sequence>
<proteinExistence type="inferred from homology"/>
<accession>A1UAF0</accession>
<reference key="1">
    <citation type="submission" date="2006-12" db="EMBL/GenBank/DDBJ databases">
        <title>Complete sequence of chromosome of Mycobacterium sp. KMS.</title>
        <authorList>
            <consortium name="US DOE Joint Genome Institute"/>
            <person name="Copeland A."/>
            <person name="Lucas S."/>
            <person name="Lapidus A."/>
            <person name="Barry K."/>
            <person name="Detter J.C."/>
            <person name="Glavina del Rio T."/>
            <person name="Hammon N."/>
            <person name="Israni S."/>
            <person name="Dalin E."/>
            <person name="Tice H."/>
            <person name="Pitluck S."/>
            <person name="Kiss H."/>
            <person name="Brettin T."/>
            <person name="Bruce D."/>
            <person name="Han C."/>
            <person name="Tapia R."/>
            <person name="Gilna P."/>
            <person name="Schmutz J."/>
            <person name="Larimer F."/>
            <person name="Land M."/>
            <person name="Hauser L."/>
            <person name="Kyrpides N."/>
            <person name="Mikhailova N."/>
            <person name="Miller C.D."/>
            <person name="Richardson P."/>
        </authorList>
    </citation>
    <scope>NUCLEOTIDE SEQUENCE [LARGE SCALE GENOMIC DNA]</scope>
    <source>
        <strain>KMS</strain>
    </source>
</reference>
<organism>
    <name type="scientific">Mycobacterium sp. (strain KMS)</name>
    <dbReference type="NCBI Taxonomy" id="189918"/>
    <lineage>
        <taxon>Bacteria</taxon>
        <taxon>Bacillati</taxon>
        <taxon>Actinomycetota</taxon>
        <taxon>Actinomycetes</taxon>
        <taxon>Mycobacteriales</taxon>
        <taxon>Mycobacteriaceae</taxon>
        <taxon>Mycobacterium</taxon>
    </lineage>
</organism>
<protein>
    <recommendedName>
        <fullName>Putative S-adenosyl-L-methionine-dependent methyltransferase Mkms_0592</fullName>
        <ecNumber>2.1.1.-</ecNumber>
    </recommendedName>
</protein>
<dbReference type="EC" id="2.1.1.-"/>
<dbReference type="EMBL" id="CP000518">
    <property type="protein sequence ID" value="ABL89808.1"/>
    <property type="molecule type" value="Genomic_DNA"/>
</dbReference>
<dbReference type="SMR" id="A1UAF0"/>
<dbReference type="STRING" id="189918.Mkms_0592"/>
<dbReference type="KEGG" id="mkm:Mkms_0592"/>
<dbReference type="HOGENOM" id="CLU_056160_2_1_11"/>
<dbReference type="OrthoDB" id="9806164at2"/>
<dbReference type="GO" id="GO:0008168">
    <property type="term" value="F:methyltransferase activity"/>
    <property type="evidence" value="ECO:0007669"/>
    <property type="project" value="UniProtKB-KW"/>
</dbReference>
<dbReference type="GO" id="GO:0032259">
    <property type="term" value="P:methylation"/>
    <property type="evidence" value="ECO:0007669"/>
    <property type="project" value="UniProtKB-KW"/>
</dbReference>
<dbReference type="Gene3D" id="3.40.50.150">
    <property type="entry name" value="Vaccinia Virus protein VP39"/>
    <property type="match status" value="1"/>
</dbReference>
<dbReference type="InterPro" id="IPR007213">
    <property type="entry name" value="Ppm1/Ppm2/Tcmp"/>
</dbReference>
<dbReference type="InterPro" id="IPR029063">
    <property type="entry name" value="SAM-dependent_MTases_sf"/>
</dbReference>
<dbReference type="InterPro" id="IPR011610">
    <property type="entry name" value="SAM_mthyl_Trfase_ML2640-like"/>
</dbReference>
<dbReference type="NCBIfam" id="TIGR00027">
    <property type="entry name" value="mthyl_TIGR00027"/>
    <property type="match status" value="1"/>
</dbReference>
<dbReference type="PANTHER" id="PTHR43619">
    <property type="entry name" value="S-ADENOSYL-L-METHIONINE-DEPENDENT METHYLTRANSFERASE YKTD-RELATED"/>
    <property type="match status" value="1"/>
</dbReference>
<dbReference type="PANTHER" id="PTHR43619:SF2">
    <property type="entry name" value="S-ADENOSYL-L-METHIONINE-DEPENDENT METHYLTRANSFERASES SUPERFAMILY PROTEIN"/>
    <property type="match status" value="1"/>
</dbReference>
<dbReference type="Pfam" id="PF04072">
    <property type="entry name" value="LCM"/>
    <property type="match status" value="1"/>
</dbReference>
<dbReference type="SUPFAM" id="SSF53335">
    <property type="entry name" value="S-adenosyl-L-methionine-dependent methyltransferases"/>
    <property type="match status" value="1"/>
</dbReference>
<feature type="chain" id="PRO_0000361214" description="Putative S-adenosyl-L-methionine-dependent methyltransferase Mkms_0592">
    <location>
        <begin position="1"/>
        <end position="249"/>
    </location>
</feature>
<feature type="binding site" evidence="1">
    <location>
        <position position="111"/>
    </location>
    <ligand>
        <name>S-adenosyl-L-methionine</name>
        <dbReference type="ChEBI" id="CHEBI:59789"/>
    </ligand>
</feature>
<feature type="binding site" evidence="1">
    <location>
        <begin position="141"/>
        <end position="142"/>
    </location>
    <ligand>
        <name>S-adenosyl-L-methionine</name>
        <dbReference type="ChEBI" id="CHEBI:59789"/>
    </ligand>
</feature>